<comment type="function">
    <text>Glucanases possibly play a role in cell expansion during growth, in cell-cell fusion during mating, and in spore release during sporulation. This enzyme may be involved in beta-glucan degradation and also function biosynthetically as a transglycosylase.</text>
</comment>
<comment type="catalytic activity">
    <reaction>
        <text>Successive hydrolysis of beta-D-glucose units from the non-reducing ends of (1-&gt;3)-beta-D-glucans, releasing alpha-glucose.</text>
        <dbReference type="EC" id="3.2.1.58"/>
    </reaction>
</comment>
<comment type="subcellular location">
    <subcellularLocation>
        <location evidence="1">Secreted</location>
        <location evidence="1">Cell wall</location>
    </subcellularLocation>
    <text evidence="1">Tightly bound to cell wall.</text>
</comment>
<comment type="similarity">
    <text evidence="4">Belongs to the glycosyl hydrolase 17 family.</text>
</comment>
<comment type="sequence caution" evidence="4">
    <conflict type="erroneous initiation">
        <sequence resource="EMBL-CDS" id="BAA19145"/>
    </conflict>
</comment>
<organism>
    <name type="scientific">Schizosaccharomyces pombe (strain 972 / ATCC 24843)</name>
    <name type="common">Fission yeast</name>
    <dbReference type="NCBI Taxonomy" id="284812"/>
    <lineage>
        <taxon>Eukaryota</taxon>
        <taxon>Fungi</taxon>
        <taxon>Dikarya</taxon>
        <taxon>Ascomycota</taxon>
        <taxon>Taphrinomycotina</taxon>
        <taxon>Schizosaccharomycetes</taxon>
        <taxon>Schizosaccharomycetales</taxon>
        <taxon>Schizosaccharomycetaceae</taxon>
        <taxon>Schizosaccharomyces</taxon>
    </lineage>
</organism>
<feature type="signal peptide" evidence="3">
    <location>
        <begin position="1"/>
        <end position="21"/>
    </location>
</feature>
<feature type="chain" id="PRO_0000011895" description="Glucan 1,3-beta-glucosidase">
    <location>
        <begin position="22"/>
        <end position="321"/>
    </location>
</feature>
<feature type="active site" description="Proton donor" evidence="2">
    <location>
        <position position="141"/>
    </location>
</feature>
<feature type="active site" description="Nucleophile" evidence="2">
    <location>
        <position position="244"/>
    </location>
</feature>
<feature type="glycosylation site" description="N-linked (GlcNAc...) asparagine" evidence="3">
    <location>
        <position position="39"/>
    </location>
</feature>
<feature type="glycosylation site" description="N-linked (GlcNAc...) asparagine" evidence="3">
    <location>
        <position position="99"/>
    </location>
</feature>
<feature type="glycosylation site" description="N-linked (GlcNAc...) asparagine" evidence="3">
    <location>
        <position position="210"/>
    </location>
</feature>
<feature type="glycosylation site" description="N-linked (GlcNAc...) asparagine" evidence="3">
    <location>
        <position position="213"/>
    </location>
</feature>
<feature type="glycosylation site" description="N-linked (GlcNAc...) asparagine" evidence="3">
    <location>
        <position position="237"/>
    </location>
</feature>
<feature type="glycosylation site" description="N-linked (GlcNAc...) asparagine" evidence="3">
    <location>
        <position position="309"/>
    </location>
</feature>
<feature type="glycosylation site" description="N-linked (GlcNAc...) asparagine" evidence="3">
    <location>
        <position position="317"/>
    </location>
</feature>
<feature type="sequence conflict" description="In Ref. 2; BAA19145." evidence="4" ref="2">
    <original>D</original>
    <variation>N</variation>
    <location>
        <position position="281"/>
    </location>
</feature>
<feature type="sequence conflict" description="In Ref. 2; BAA19145." evidence="4" ref="2">
    <original>F</original>
    <variation>L</variation>
    <location>
        <position position="303"/>
    </location>
</feature>
<keyword id="KW-0134">Cell wall</keyword>
<keyword id="KW-0325">Glycoprotein</keyword>
<keyword id="KW-0326">Glycosidase</keyword>
<keyword id="KW-0378">Hydrolase</keyword>
<keyword id="KW-1185">Reference proteome</keyword>
<keyword id="KW-0964">Secreted</keyword>
<keyword id="KW-0732">Signal</keyword>
<name>BGL2_SCHPO</name>
<reference key="1">
    <citation type="journal article" date="2002" name="Nature">
        <title>The genome sequence of Schizosaccharomyces pombe.</title>
        <authorList>
            <person name="Wood V."/>
            <person name="Gwilliam R."/>
            <person name="Rajandream M.A."/>
            <person name="Lyne M.H."/>
            <person name="Lyne R."/>
            <person name="Stewart A."/>
            <person name="Sgouros J.G."/>
            <person name="Peat N."/>
            <person name="Hayles J."/>
            <person name="Baker S.G."/>
            <person name="Basham D."/>
            <person name="Bowman S."/>
            <person name="Brooks K."/>
            <person name="Brown D."/>
            <person name="Brown S."/>
            <person name="Chillingworth T."/>
            <person name="Churcher C.M."/>
            <person name="Collins M."/>
            <person name="Connor R."/>
            <person name="Cronin A."/>
            <person name="Davis P."/>
            <person name="Feltwell T."/>
            <person name="Fraser A."/>
            <person name="Gentles S."/>
            <person name="Goble A."/>
            <person name="Hamlin N."/>
            <person name="Harris D.E."/>
            <person name="Hidalgo J."/>
            <person name="Hodgson G."/>
            <person name="Holroyd S."/>
            <person name="Hornsby T."/>
            <person name="Howarth S."/>
            <person name="Huckle E.J."/>
            <person name="Hunt S."/>
            <person name="Jagels K."/>
            <person name="James K.D."/>
            <person name="Jones L."/>
            <person name="Jones M."/>
            <person name="Leather S."/>
            <person name="McDonald S."/>
            <person name="McLean J."/>
            <person name="Mooney P."/>
            <person name="Moule S."/>
            <person name="Mungall K.L."/>
            <person name="Murphy L.D."/>
            <person name="Niblett D."/>
            <person name="Odell C."/>
            <person name="Oliver K."/>
            <person name="O'Neil S."/>
            <person name="Pearson D."/>
            <person name="Quail M.A."/>
            <person name="Rabbinowitsch E."/>
            <person name="Rutherford K.M."/>
            <person name="Rutter S."/>
            <person name="Saunders D."/>
            <person name="Seeger K."/>
            <person name="Sharp S."/>
            <person name="Skelton J."/>
            <person name="Simmonds M.N."/>
            <person name="Squares R."/>
            <person name="Squares S."/>
            <person name="Stevens K."/>
            <person name="Taylor K."/>
            <person name="Taylor R.G."/>
            <person name="Tivey A."/>
            <person name="Walsh S.V."/>
            <person name="Warren T."/>
            <person name="Whitehead S."/>
            <person name="Woodward J.R."/>
            <person name="Volckaert G."/>
            <person name="Aert R."/>
            <person name="Robben J."/>
            <person name="Grymonprez B."/>
            <person name="Weltjens I."/>
            <person name="Vanstreels E."/>
            <person name="Rieger M."/>
            <person name="Schaefer M."/>
            <person name="Mueller-Auer S."/>
            <person name="Gabel C."/>
            <person name="Fuchs M."/>
            <person name="Duesterhoeft A."/>
            <person name="Fritzc C."/>
            <person name="Holzer E."/>
            <person name="Moestl D."/>
            <person name="Hilbert H."/>
            <person name="Borzym K."/>
            <person name="Langer I."/>
            <person name="Beck A."/>
            <person name="Lehrach H."/>
            <person name="Reinhardt R."/>
            <person name="Pohl T.M."/>
            <person name="Eger P."/>
            <person name="Zimmermann W."/>
            <person name="Wedler H."/>
            <person name="Wambutt R."/>
            <person name="Purnelle B."/>
            <person name="Goffeau A."/>
            <person name="Cadieu E."/>
            <person name="Dreano S."/>
            <person name="Gloux S."/>
            <person name="Lelaure V."/>
            <person name="Mottier S."/>
            <person name="Galibert F."/>
            <person name="Aves S.J."/>
            <person name="Xiang Z."/>
            <person name="Hunt C."/>
            <person name="Moore K."/>
            <person name="Hurst S.M."/>
            <person name="Lucas M."/>
            <person name="Rochet M."/>
            <person name="Gaillardin C."/>
            <person name="Tallada V.A."/>
            <person name="Garzon A."/>
            <person name="Thode G."/>
            <person name="Daga R.R."/>
            <person name="Cruzado L."/>
            <person name="Jimenez J."/>
            <person name="Sanchez M."/>
            <person name="del Rey F."/>
            <person name="Benito J."/>
            <person name="Dominguez A."/>
            <person name="Revuelta J.L."/>
            <person name="Moreno S."/>
            <person name="Armstrong J."/>
            <person name="Forsburg S.L."/>
            <person name="Cerutti L."/>
            <person name="Lowe T."/>
            <person name="McCombie W.R."/>
            <person name="Paulsen I."/>
            <person name="Potashkin J."/>
            <person name="Shpakovski G.V."/>
            <person name="Ussery D."/>
            <person name="Barrell B.G."/>
            <person name="Nurse P."/>
        </authorList>
    </citation>
    <scope>NUCLEOTIDE SEQUENCE [LARGE SCALE GENOMIC DNA]</scope>
    <source>
        <strain>972 / ATCC 24843</strain>
    </source>
</reference>
<reference key="2">
    <citation type="journal article" date="1997" name="DNA Res.">
        <title>Identification of open reading frames in Schizosaccharomyces pombe cDNAs.</title>
        <authorList>
            <person name="Yoshioka S."/>
            <person name="Kato K."/>
            <person name="Nakai K."/>
            <person name="Okayama H."/>
            <person name="Nojima H."/>
        </authorList>
    </citation>
    <scope>NUCLEOTIDE SEQUENCE [LARGE SCALE MRNA] OF 11-321</scope>
    <source>
        <strain>PR745</strain>
    </source>
</reference>
<sequence>MQFLSSFVFAALALLPLSAMAVDEAASEIASSTKPASTNGTLSFCLGVKHADGTCKYTDDYLADFEVLAPYTNMIRTYATSDCNTLEYLLPALAQSPYNFSAILGVWPTDDAHYDLEKQALMQYLPQYGVDHVRAITVGSEVLYRNDLPADVLAERIYDVRGLVQQKLGFDVPVGTADSWNLWAGGSGDVVITASDFIMSNDFPYWQGQNTSNMTNTFISDTLAALERVQSVKGTNNVTFWVGETGWPTDGPSYGEADATVDIASEFFQEALCNIRRKGIDIFFFEAFDEDWKGDSSSVEPYFGAMYSNRTLKYNLNCTSE</sequence>
<gene>
    <name type="primary">bgl2</name>
    <name type="ORF">SPAC26H5.08c</name>
</gene>
<proteinExistence type="evidence at transcript level"/>
<dbReference type="EC" id="3.2.1.58"/>
<dbReference type="EMBL" id="CU329670">
    <property type="protein sequence ID" value="CAB16200.1"/>
    <property type="molecule type" value="Genomic_DNA"/>
</dbReference>
<dbReference type="EMBL" id="AB000539">
    <property type="protein sequence ID" value="BAA19145.1"/>
    <property type="status" value="ALT_INIT"/>
    <property type="molecule type" value="mRNA"/>
</dbReference>
<dbReference type="PIR" id="T38427">
    <property type="entry name" value="T38427"/>
</dbReference>
<dbReference type="RefSeq" id="NP_594455.1">
    <property type="nucleotide sequence ID" value="NM_001019884.2"/>
</dbReference>
<dbReference type="SMR" id="O13990"/>
<dbReference type="BioGRID" id="279153">
    <property type="interactions" value="20"/>
</dbReference>
<dbReference type="FunCoup" id="O13990">
    <property type="interactions" value="47"/>
</dbReference>
<dbReference type="STRING" id="284812.O13990"/>
<dbReference type="CAZy" id="GH17">
    <property type="family name" value="Glycoside Hydrolase Family 17"/>
</dbReference>
<dbReference type="GlyCosmos" id="O13990">
    <property type="glycosylation" value="7 sites, No reported glycans"/>
</dbReference>
<dbReference type="iPTMnet" id="O13990"/>
<dbReference type="PaxDb" id="4896-SPAC26H5.08c.1"/>
<dbReference type="EnsemblFungi" id="SPAC26H5.08c.1">
    <property type="protein sequence ID" value="SPAC26H5.08c.1:pep"/>
    <property type="gene ID" value="SPAC26H5.08c"/>
</dbReference>
<dbReference type="GeneID" id="2542700"/>
<dbReference type="KEGG" id="spo:2542700"/>
<dbReference type="PomBase" id="SPAC26H5.08c">
    <property type="gene designation" value="bgl2"/>
</dbReference>
<dbReference type="VEuPathDB" id="FungiDB:SPAC26H5.08c"/>
<dbReference type="eggNOG" id="ENOG502QQE6">
    <property type="taxonomic scope" value="Eukaryota"/>
</dbReference>
<dbReference type="HOGENOM" id="CLU_028820_2_1_1"/>
<dbReference type="InParanoid" id="O13990"/>
<dbReference type="OMA" id="EGICAMR"/>
<dbReference type="PhylomeDB" id="O13990"/>
<dbReference type="PRO" id="PR:O13990"/>
<dbReference type="Proteomes" id="UP000002485">
    <property type="component" value="Chromosome I"/>
</dbReference>
<dbReference type="GO" id="GO:0009986">
    <property type="term" value="C:cell surface"/>
    <property type="evidence" value="ECO:0000318"/>
    <property type="project" value="GO_Central"/>
</dbReference>
<dbReference type="GO" id="GO:0005576">
    <property type="term" value="C:extracellular region"/>
    <property type="evidence" value="ECO:0000314"/>
    <property type="project" value="PomBase"/>
</dbReference>
<dbReference type="GO" id="GO:0009277">
    <property type="term" value="C:fungal-type cell wall"/>
    <property type="evidence" value="ECO:0000318"/>
    <property type="project" value="GO_Central"/>
</dbReference>
<dbReference type="GO" id="GO:0042973">
    <property type="term" value="F:glucan endo-1,3-beta-D-glucosidase activity"/>
    <property type="evidence" value="ECO:0000318"/>
    <property type="project" value="GO_Central"/>
</dbReference>
<dbReference type="GO" id="GO:0004338">
    <property type="term" value="F:glucan exo-1,3-beta-glucosidase activity"/>
    <property type="evidence" value="ECO:0007669"/>
    <property type="project" value="UniProtKB-EC"/>
</dbReference>
<dbReference type="GO" id="GO:0071555">
    <property type="term" value="P:cell wall organization"/>
    <property type="evidence" value="ECO:0000318"/>
    <property type="project" value="GO_Central"/>
</dbReference>
<dbReference type="GO" id="GO:0070879">
    <property type="term" value="P:fungal-type cell wall beta-glucan metabolic process"/>
    <property type="evidence" value="ECO:0000305"/>
    <property type="project" value="PomBase"/>
</dbReference>
<dbReference type="Gene3D" id="3.20.20.80">
    <property type="entry name" value="Glycosidases"/>
    <property type="match status" value="1"/>
</dbReference>
<dbReference type="InterPro" id="IPR050732">
    <property type="entry name" value="Beta-glucan_modifiers"/>
</dbReference>
<dbReference type="InterPro" id="IPR000490">
    <property type="entry name" value="Glyco_hydro_17"/>
</dbReference>
<dbReference type="InterPro" id="IPR017853">
    <property type="entry name" value="Glycoside_hydrolase_SF"/>
</dbReference>
<dbReference type="PANTHER" id="PTHR16631">
    <property type="entry name" value="GLUCAN 1,3-BETA-GLUCOSIDASE"/>
    <property type="match status" value="1"/>
</dbReference>
<dbReference type="PANTHER" id="PTHR16631:SF26">
    <property type="entry name" value="GLUCAN 1,3-BETA-GLUCOSIDASE"/>
    <property type="match status" value="1"/>
</dbReference>
<dbReference type="Pfam" id="PF00332">
    <property type="entry name" value="Glyco_hydro_17"/>
    <property type="match status" value="1"/>
</dbReference>
<dbReference type="SUPFAM" id="SSF51445">
    <property type="entry name" value="(Trans)glycosidases"/>
    <property type="match status" value="1"/>
</dbReference>
<dbReference type="PROSITE" id="PS00587">
    <property type="entry name" value="GLYCOSYL_HYDROL_F17"/>
    <property type="match status" value="1"/>
</dbReference>
<evidence type="ECO:0000250" key="1"/>
<evidence type="ECO:0000250" key="2">
    <source>
        <dbReference type="UniProtKB" id="O22317"/>
    </source>
</evidence>
<evidence type="ECO:0000255" key="3"/>
<evidence type="ECO:0000305" key="4"/>
<protein>
    <recommendedName>
        <fullName>Glucan 1,3-beta-glucosidase</fullName>
        <ecNumber>3.2.1.58</ecNumber>
    </recommendedName>
    <alternativeName>
        <fullName>Exo-1,3-beta-glucanase</fullName>
    </alternativeName>
</protein>
<accession>O13990</accession>
<accession>P79062</accession>